<sequence length="274" mass="30347">MAVIKMKPTSPGMRGMVKISRDHLHKGEPYAPLLEPQFQKSGRNNNGHITVRHKGGGHKHHYRVVDFKRNKDAIPAKVERIEYDPNRTAHIALLCYADGERTYIIAPRGLEVGATLISGSEAPIRVGNTLPIRNIPVGSTIHCIEMQIGKGAQIARSAGTSATLLAREGTYAQVRMRSGEVRKIHIECRATIGEVANEEHSLRRLGKAGVKRWMGIRPTVRGVVMNPVDHPHGGGEGKTGEGRHPVDPWGNLTKGYRTRNNKRTQVMIVSRRKK</sequence>
<organism>
    <name type="scientific">Polaromonas sp. (strain JS666 / ATCC BAA-500)</name>
    <dbReference type="NCBI Taxonomy" id="296591"/>
    <lineage>
        <taxon>Bacteria</taxon>
        <taxon>Pseudomonadati</taxon>
        <taxon>Pseudomonadota</taxon>
        <taxon>Betaproteobacteria</taxon>
        <taxon>Burkholderiales</taxon>
        <taxon>Comamonadaceae</taxon>
        <taxon>Polaromonas</taxon>
    </lineage>
</organism>
<comment type="function">
    <text evidence="1">One of the primary rRNA binding proteins. Required for association of the 30S and 50S subunits to form the 70S ribosome, for tRNA binding and peptide bond formation. It has been suggested to have peptidyltransferase activity; this is somewhat controversial. Makes several contacts with the 16S rRNA in the 70S ribosome.</text>
</comment>
<comment type="subunit">
    <text evidence="1">Part of the 50S ribosomal subunit. Forms a bridge to the 30S subunit in the 70S ribosome.</text>
</comment>
<comment type="similarity">
    <text evidence="1">Belongs to the universal ribosomal protein uL2 family.</text>
</comment>
<accession>Q12GW8</accession>
<reference key="1">
    <citation type="journal article" date="2008" name="Appl. Environ. Microbiol.">
        <title>The genome of Polaromonas sp. strain JS666: insights into the evolution of a hydrocarbon- and xenobiotic-degrading bacterium, and features of relevance to biotechnology.</title>
        <authorList>
            <person name="Mattes T.E."/>
            <person name="Alexander A.K."/>
            <person name="Richardson P.M."/>
            <person name="Munk A.C."/>
            <person name="Han C.S."/>
            <person name="Stothard P."/>
            <person name="Coleman N.V."/>
        </authorList>
    </citation>
    <scope>NUCLEOTIDE SEQUENCE [LARGE SCALE GENOMIC DNA]</scope>
    <source>
        <strain>JS666 / ATCC BAA-500</strain>
    </source>
</reference>
<proteinExistence type="inferred from homology"/>
<feature type="chain" id="PRO_0000309980" description="Large ribosomal subunit protein uL2">
    <location>
        <begin position="1"/>
        <end position="274"/>
    </location>
</feature>
<feature type="region of interest" description="Disordered" evidence="2">
    <location>
        <begin position="224"/>
        <end position="256"/>
    </location>
</feature>
<feature type="compositionally biased region" description="Basic and acidic residues" evidence="2">
    <location>
        <begin position="229"/>
        <end position="246"/>
    </location>
</feature>
<gene>
    <name evidence="1" type="primary">rplB</name>
    <name type="ordered locus">Bpro_0259</name>
</gene>
<protein>
    <recommendedName>
        <fullName evidence="1">Large ribosomal subunit protein uL2</fullName>
    </recommendedName>
    <alternativeName>
        <fullName evidence="3">50S ribosomal protein L2</fullName>
    </alternativeName>
</protein>
<keyword id="KW-1185">Reference proteome</keyword>
<keyword id="KW-0687">Ribonucleoprotein</keyword>
<keyword id="KW-0689">Ribosomal protein</keyword>
<keyword id="KW-0694">RNA-binding</keyword>
<keyword id="KW-0699">rRNA-binding</keyword>
<name>RL2_POLSJ</name>
<evidence type="ECO:0000255" key="1">
    <source>
        <dbReference type="HAMAP-Rule" id="MF_01320"/>
    </source>
</evidence>
<evidence type="ECO:0000256" key="2">
    <source>
        <dbReference type="SAM" id="MobiDB-lite"/>
    </source>
</evidence>
<evidence type="ECO:0000305" key="3"/>
<dbReference type="EMBL" id="CP000316">
    <property type="protein sequence ID" value="ABE42224.1"/>
    <property type="molecule type" value="Genomic_DNA"/>
</dbReference>
<dbReference type="RefSeq" id="WP_011481232.1">
    <property type="nucleotide sequence ID" value="NC_007948.1"/>
</dbReference>
<dbReference type="SMR" id="Q12GW8"/>
<dbReference type="STRING" id="296591.Bpro_0259"/>
<dbReference type="KEGG" id="pol:Bpro_0259"/>
<dbReference type="eggNOG" id="COG0090">
    <property type="taxonomic scope" value="Bacteria"/>
</dbReference>
<dbReference type="HOGENOM" id="CLU_036235_2_1_4"/>
<dbReference type="OrthoDB" id="9778722at2"/>
<dbReference type="Proteomes" id="UP000001983">
    <property type="component" value="Chromosome"/>
</dbReference>
<dbReference type="GO" id="GO:0015934">
    <property type="term" value="C:large ribosomal subunit"/>
    <property type="evidence" value="ECO:0007669"/>
    <property type="project" value="InterPro"/>
</dbReference>
<dbReference type="GO" id="GO:0019843">
    <property type="term" value="F:rRNA binding"/>
    <property type="evidence" value="ECO:0007669"/>
    <property type="project" value="UniProtKB-UniRule"/>
</dbReference>
<dbReference type="GO" id="GO:0003735">
    <property type="term" value="F:structural constituent of ribosome"/>
    <property type="evidence" value="ECO:0007669"/>
    <property type="project" value="InterPro"/>
</dbReference>
<dbReference type="GO" id="GO:0016740">
    <property type="term" value="F:transferase activity"/>
    <property type="evidence" value="ECO:0007669"/>
    <property type="project" value="InterPro"/>
</dbReference>
<dbReference type="GO" id="GO:0002181">
    <property type="term" value="P:cytoplasmic translation"/>
    <property type="evidence" value="ECO:0007669"/>
    <property type="project" value="TreeGrafter"/>
</dbReference>
<dbReference type="FunFam" id="2.30.30.30:FF:000001">
    <property type="entry name" value="50S ribosomal protein L2"/>
    <property type="match status" value="1"/>
</dbReference>
<dbReference type="FunFam" id="2.40.50.140:FF:000003">
    <property type="entry name" value="50S ribosomal protein L2"/>
    <property type="match status" value="1"/>
</dbReference>
<dbReference type="FunFam" id="4.10.950.10:FF:000001">
    <property type="entry name" value="50S ribosomal protein L2"/>
    <property type="match status" value="1"/>
</dbReference>
<dbReference type="Gene3D" id="2.30.30.30">
    <property type="match status" value="1"/>
</dbReference>
<dbReference type="Gene3D" id="2.40.50.140">
    <property type="entry name" value="Nucleic acid-binding proteins"/>
    <property type="match status" value="1"/>
</dbReference>
<dbReference type="Gene3D" id="4.10.950.10">
    <property type="entry name" value="Ribosomal protein L2, domain 3"/>
    <property type="match status" value="1"/>
</dbReference>
<dbReference type="HAMAP" id="MF_01320_B">
    <property type="entry name" value="Ribosomal_uL2_B"/>
    <property type="match status" value="1"/>
</dbReference>
<dbReference type="InterPro" id="IPR012340">
    <property type="entry name" value="NA-bd_OB-fold"/>
</dbReference>
<dbReference type="InterPro" id="IPR014722">
    <property type="entry name" value="Rib_uL2_dom2"/>
</dbReference>
<dbReference type="InterPro" id="IPR002171">
    <property type="entry name" value="Ribosomal_uL2"/>
</dbReference>
<dbReference type="InterPro" id="IPR005880">
    <property type="entry name" value="Ribosomal_uL2_bac/org-type"/>
</dbReference>
<dbReference type="InterPro" id="IPR022669">
    <property type="entry name" value="Ribosomal_uL2_C"/>
</dbReference>
<dbReference type="InterPro" id="IPR022671">
    <property type="entry name" value="Ribosomal_uL2_CS"/>
</dbReference>
<dbReference type="InterPro" id="IPR014726">
    <property type="entry name" value="Ribosomal_uL2_dom3"/>
</dbReference>
<dbReference type="InterPro" id="IPR022666">
    <property type="entry name" value="Ribosomal_uL2_RNA-bd_dom"/>
</dbReference>
<dbReference type="InterPro" id="IPR008991">
    <property type="entry name" value="Translation_prot_SH3-like_sf"/>
</dbReference>
<dbReference type="NCBIfam" id="TIGR01171">
    <property type="entry name" value="rplB_bact"/>
    <property type="match status" value="1"/>
</dbReference>
<dbReference type="PANTHER" id="PTHR13691:SF5">
    <property type="entry name" value="LARGE RIBOSOMAL SUBUNIT PROTEIN UL2M"/>
    <property type="match status" value="1"/>
</dbReference>
<dbReference type="PANTHER" id="PTHR13691">
    <property type="entry name" value="RIBOSOMAL PROTEIN L2"/>
    <property type="match status" value="1"/>
</dbReference>
<dbReference type="Pfam" id="PF00181">
    <property type="entry name" value="Ribosomal_L2"/>
    <property type="match status" value="1"/>
</dbReference>
<dbReference type="Pfam" id="PF03947">
    <property type="entry name" value="Ribosomal_L2_C"/>
    <property type="match status" value="1"/>
</dbReference>
<dbReference type="PIRSF" id="PIRSF002158">
    <property type="entry name" value="Ribosomal_L2"/>
    <property type="match status" value="1"/>
</dbReference>
<dbReference type="SMART" id="SM01383">
    <property type="entry name" value="Ribosomal_L2"/>
    <property type="match status" value="1"/>
</dbReference>
<dbReference type="SMART" id="SM01382">
    <property type="entry name" value="Ribosomal_L2_C"/>
    <property type="match status" value="1"/>
</dbReference>
<dbReference type="SUPFAM" id="SSF50249">
    <property type="entry name" value="Nucleic acid-binding proteins"/>
    <property type="match status" value="1"/>
</dbReference>
<dbReference type="SUPFAM" id="SSF50104">
    <property type="entry name" value="Translation proteins SH3-like domain"/>
    <property type="match status" value="1"/>
</dbReference>
<dbReference type="PROSITE" id="PS00467">
    <property type="entry name" value="RIBOSOMAL_L2"/>
    <property type="match status" value="1"/>
</dbReference>